<sequence>GSSGLISMPRV</sequence>
<proteinExistence type="evidence at protein level"/>
<accession>P84592</accession>
<organism>
    <name type="scientific">Blaberus giganteus</name>
    <name type="common">Giant cockroach</name>
    <dbReference type="NCBI Taxonomy" id="36943"/>
    <lineage>
        <taxon>Eukaryota</taxon>
        <taxon>Metazoa</taxon>
        <taxon>Ecdysozoa</taxon>
        <taxon>Arthropoda</taxon>
        <taxon>Hexapoda</taxon>
        <taxon>Insecta</taxon>
        <taxon>Pterygota</taxon>
        <taxon>Neoptera</taxon>
        <taxon>Polyneoptera</taxon>
        <taxon>Dictyoptera</taxon>
        <taxon>Blattodea</taxon>
        <taxon>Blaberoidea</taxon>
        <taxon>Blaberidae</taxon>
        <taxon>Blaberinae</taxon>
        <taxon>Blaberus</taxon>
    </lineage>
</organism>
<name>PVK2_BLAGI</name>
<reference key="1">
    <citation type="journal article" date="2009" name="BMC Evol. Biol.">
        <title>A proteomic approach for studying insect phylogeny: CAPA peptides of ancient insect taxa (Dictyoptera, Blattoptera) as a test case.</title>
        <authorList>
            <person name="Roth S."/>
            <person name="Fromm B."/>
            <person name="Gaede G."/>
            <person name="Predel R."/>
        </authorList>
    </citation>
    <scope>PROTEIN SEQUENCE</scope>
    <scope>AMIDATION AT VAL-11</scope>
    <source>
        <tissue>Abdominal perisympathetic organs</tissue>
    </source>
</reference>
<reference evidence="4" key="2">
    <citation type="submission" date="2005-05" db="UniProtKB">
        <authorList>
            <person name="Predel R."/>
        </authorList>
    </citation>
    <scope>PROTEIN SEQUENCE</scope>
    <scope>TISSUE SPECIFICITY</scope>
    <scope>MASS SPECTROMETRY</scope>
    <scope>AMIDATION AT VAL-11</scope>
    <source>
        <tissue evidence="2">Abdominal perisympathetic organs</tissue>
    </source>
</reference>
<keyword id="KW-0027">Amidation</keyword>
<keyword id="KW-0903">Direct protein sequencing</keyword>
<keyword id="KW-0527">Neuropeptide</keyword>
<keyword id="KW-0964">Secreted</keyword>
<evidence type="ECO:0000255" key="1"/>
<evidence type="ECO:0000269" key="2">
    <source>
    </source>
</evidence>
<evidence type="ECO:0000269" key="3">
    <source ref="2"/>
</evidence>
<evidence type="ECO:0000305" key="4"/>
<feature type="peptide" id="PRO_0000044256" description="Periviscerokinin-2">
    <location>
        <begin position="1"/>
        <end position="11"/>
    </location>
</feature>
<feature type="modified residue" description="Valine amide" evidence="2 3">
    <location>
        <position position="11"/>
    </location>
</feature>
<dbReference type="GO" id="GO:0005576">
    <property type="term" value="C:extracellular region"/>
    <property type="evidence" value="ECO:0007669"/>
    <property type="project" value="UniProtKB-SubCell"/>
</dbReference>
<dbReference type="GO" id="GO:0007218">
    <property type="term" value="P:neuropeptide signaling pathway"/>
    <property type="evidence" value="ECO:0007669"/>
    <property type="project" value="UniProtKB-KW"/>
</dbReference>
<dbReference type="InterPro" id="IPR013231">
    <property type="entry name" value="Periviscerokinin"/>
</dbReference>
<dbReference type="Pfam" id="PF08259">
    <property type="entry name" value="Periviscerokin"/>
    <property type="match status" value="1"/>
</dbReference>
<comment type="function">
    <text evidence="4">Mediates visceral muscle contractile activity (myotropic activity).</text>
</comment>
<comment type="subcellular location">
    <subcellularLocation>
        <location evidence="4">Secreted</location>
    </subcellularLocation>
</comment>
<comment type="tissue specificity">
    <text evidence="2 3">Expressed in abdominal perisympathetic organs and abdominal ganglia.</text>
</comment>
<comment type="mass spectrometry"/>
<comment type="similarity">
    <text evidence="1">Belongs to the periviscerokinin family.</text>
</comment>
<protein>
    <recommendedName>
        <fullName>Periviscerokinin-2</fullName>
        <shortName>BlaGi-PVK-2</shortName>
        <shortName>PVK-2</shortName>
    </recommendedName>
</protein>